<organism>
    <name type="scientific">Chlorella vulgaris</name>
    <name type="common">Green alga</name>
    <dbReference type="NCBI Taxonomy" id="3077"/>
    <lineage>
        <taxon>Eukaryota</taxon>
        <taxon>Viridiplantae</taxon>
        <taxon>Chlorophyta</taxon>
        <taxon>core chlorophytes</taxon>
        <taxon>Trebouxiophyceae</taxon>
        <taxon>Chlorellales</taxon>
        <taxon>Chlorellaceae</taxon>
        <taxon>Chlorella clade</taxon>
        <taxon>Chlorella</taxon>
    </lineage>
</organism>
<reference key="1">
    <citation type="journal article" date="1992" name="Life Sci. Adv. (Genet.)">
        <title>Gene organization in Chlorella chloroplast genome is peculiar but suggests common lineage with land plants.</title>
        <authorList>
            <person name="Yoshinaga K."/>
            <person name="Iwasaki H."/>
            <person name="Sasaki T."/>
        </authorList>
    </citation>
    <scope>NUCLEOTIDE SEQUENCE [GENOMIC DNA]</scope>
    <source>
        <strain>IAM C-27 / Tamiya</strain>
    </source>
</reference>
<reference key="2">
    <citation type="journal article" date="1997" name="Proc. Natl. Acad. Sci. U.S.A.">
        <title>Complete nucleotide sequence of the chloroplast genome from the green alga Chlorella vulgaris: the existence of genes possibly involved in chloroplast division.</title>
        <authorList>
            <person name="Wakasugi T."/>
            <person name="Nagai T."/>
            <person name="Kapoor M."/>
            <person name="Sugita M."/>
            <person name="Ito M."/>
            <person name="Ito S."/>
            <person name="Tsudzuki J."/>
            <person name="Nakashima K."/>
            <person name="Tsudzuki T."/>
            <person name="Suzuki Y."/>
            <person name="Hamada A."/>
            <person name="Ohta T."/>
            <person name="Inamura A."/>
            <person name="Yoshinaga K."/>
            <person name="Sugiura M."/>
        </authorList>
    </citation>
    <scope>NUCLEOTIDE SEQUENCE [LARGE SCALE GENOMIC DNA]</scope>
    <source>
        <strain>IAM C-27 / Tamiya</strain>
    </source>
</reference>
<keyword id="KW-0150">Chloroplast</keyword>
<keyword id="KW-0934">Plastid</keyword>
<keyword id="KW-0687">Ribonucleoprotein</keyword>
<keyword id="KW-0689">Ribosomal protein</keyword>
<keyword id="KW-0694">RNA-binding</keyword>
<keyword id="KW-0699">rRNA-binding</keyword>
<protein>
    <recommendedName>
        <fullName evidence="1">Small ribosomal subunit protein uS14c</fullName>
    </recommendedName>
    <alternativeName>
        <fullName evidence="2">30S ribosomal protein S14, chloroplastic</fullName>
    </alternativeName>
</protein>
<name>RR14_CHLVU</name>
<sequence>MAKKSMIERDRKRARLITKYAAKRKNLLVEIKTATSLEDKFNLHRKLQQLPRNSAPVRSHNRCTITGRPRGYFRDFGLSRHVLREYALQGFLPGVVKASW</sequence>
<accession>P32976</accession>
<evidence type="ECO:0000255" key="1">
    <source>
        <dbReference type="HAMAP-Rule" id="MF_00537"/>
    </source>
</evidence>
<evidence type="ECO:0000305" key="2"/>
<feature type="chain" id="PRO_0000130969" description="Small ribosomal subunit protein uS14c">
    <location>
        <begin position="1"/>
        <end position="100"/>
    </location>
</feature>
<comment type="function">
    <text evidence="1">Binds 16S rRNA, required for the assembly of 30S particles.</text>
</comment>
<comment type="subunit">
    <text evidence="1">Part of the 30S ribosomal subunit.</text>
</comment>
<comment type="subcellular location">
    <subcellularLocation>
        <location>Plastid</location>
        <location>Chloroplast</location>
    </subcellularLocation>
</comment>
<comment type="similarity">
    <text evidence="1">Belongs to the universal ribosomal protein uS14 family.</text>
</comment>
<geneLocation type="chloroplast"/>
<proteinExistence type="inferred from homology"/>
<gene>
    <name evidence="1" type="primary">rps14</name>
</gene>
<dbReference type="EMBL" id="D10997">
    <property type="protein sequence ID" value="BAA01766.1"/>
    <property type="molecule type" value="Genomic_DNA"/>
</dbReference>
<dbReference type="EMBL" id="AB001684">
    <property type="protein sequence ID" value="BAA57975.1"/>
    <property type="molecule type" value="Genomic_DNA"/>
</dbReference>
<dbReference type="PIR" id="T07327">
    <property type="entry name" value="T07327"/>
</dbReference>
<dbReference type="RefSeq" id="NP_045899.1">
    <property type="nucleotide sequence ID" value="NC_001865.1"/>
</dbReference>
<dbReference type="SMR" id="P32976"/>
<dbReference type="GeneID" id="809136"/>
<dbReference type="OrthoDB" id="413436at2759"/>
<dbReference type="GO" id="GO:0009507">
    <property type="term" value="C:chloroplast"/>
    <property type="evidence" value="ECO:0007669"/>
    <property type="project" value="UniProtKB-SubCell"/>
</dbReference>
<dbReference type="GO" id="GO:0015935">
    <property type="term" value="C:small ribosomal subunit"/>
    <property type="evidence" value="ECO:0007669"/>
    <property type="project" value="TreeGrafter"/>
</dbReference>
<dbReference type="GO" id="GO:0019843">
    <property type="term" value="F:rRNA binding"/>
    <property type="evidence" value="ECO:0007669"/>
    <property type="project" value="UniProtKB-UniRule"/>
</dbReference>
<dbReference type="GO" id="GO:0003735">
    <property type="term" value="F:structural constituent of ribosome"/>
    <property type="evidence" value="ECO:0007669"/>
    <property type="project" value="InterPro"/>
</dbReference>
<dbReference type="GO" id="GO:0006412">
    <property type="term" value="P:translation"/>
    <property type="evidence" value="ECO:0007669"/>
    <property type="project" value="UniProtKB-UniRule"/>
</dbReference>
<dbReference type="FunFam" id="1.10.287.1480:FF:000001">
    <property type="entry name" value="30S ribosomal protein S14"/>
    <property type="match status" value="1"/>
</dbReference>
<dbReference type="Gene3D" id="1.10.287.1480">
    <property type="match status" value="1"/>
</dbReference>
<dbReference type="HAMAP" id="MF_00537">
    <property type="entry name" value="Ribosomal_uS14_1"/>
    <property type="match status" value="1"/>
</dbReference>
<dbReference type="InterPro" id="IPR001209">
    <property type="entry name" value="Ribosomal_uS14"/>
</dbReference>
<dbReference type="InterPro" id="IPR023036">
    <property type="entry name" value="Ribosomal_uS14_bac/plastid"/>
</dbReference>
<dbReference type="InterPro" id="IPR018271">
    <property type="entry name" value="Ribosomal_uS14_CS"/>
</dbReference>
<dbReference type="NCBIfam" id="NF006477">
    <property type="entry name" value="PRK08881.1"/>
    <property type="match status" value="1"/>
</dbReference>
<dbReference type="PANTHER" id="PTHR19836">
    <property type="entry name" value="30S RIBOSOMAL PROTEIN S14"/>
    <property type="match status" value="1"/>
</dbReference>
<dbReference type="PANTHER" id="PTHR19836:SF19">
    <property type="entry name" value="SMALL RIBOSOMAL SUBUNIT PROTEIN US14M"/>
    <property type="match status" value="1"/>
</dbReference>
<dbReference type="Pfam" id="PF00253">
    <property type="entry name" value="Ribosomal_S14"/>
    <property type="match status" value="1"/>
</dbReference>
<dbReference type="SUPFAM" id="SSF57716">
    <property type="entry name" value="Glucocorticoid receptor-like (DNA-binding domain)"/>
    <property type="match status" value="1"/>
</dbReference>
<dbReference type="PROSITE" id="PS00527">
    <property type="entry name" value="RIBOSOMAL_S14"/>
    <property type="match status" value="1"/>
</dbReference>